<protein>
    <recommendedName>
        <fullName evidence="1">5'-methylthioadenosine/S-adenosylhomocysteine nucleosidase</fullName>
        <shortName evidence="1">MTA/SAH nucleosidase</shortName>
        <shortName evidence="1">MTAN</shortName>
        <ecNumber evidence="1">3.2.2.9</ecNumber>
    </recommendedName>
    <alternativeName>
        <fullName evidence="1">5'-deoxyadenosine nucleosidase</fullName>
        <shortName evidence="1">DOA nucleosidase</shortName>
        <shortName evidence="1">dAdo nucleosidase</shortName>
    </alternativeName>
    <alternativeName>
        <fullName evidence="1">5'-methylthioadenosine nucleosidase</fullName>
        <shortName evidence="1">MTA nucleosidase</shortName>
    </alternativeName>
    <alternativeName>
        <fullName evidence="1">S-adenosylhomocysteine nucleosidase</fullName>
        <shortName evidence="1">AdoHcy nucleosidase</shortName>
        <shortName evidence="1">SAH nucleosidase</shortName>
        <shortName evidence="1">SRH nucleosidase</shortName>
    </alternativeName>
</protein>
<gene>
    <name evidence="1" type="primary">mtnN</name>
    <name type="ordered locus">lwe1507</name>
</gene>
<dbReference type="EC" id="3.2.2.9" evidence="1"/>
<dbReference type="EMBL" id="AM263198">
    <property type="protein sequence ID" value="CAK20925.1"/>
    <property type="molecule type" value="Genomic_DNA"/>
</dbReference>
<dbReference type="RefSeq" id="WP_011702297.1">
    <property type="nucleotide sequence ID" value="NC_008555.1"/>
</dbReference>
<dbReference type="SMR" id="A0AIU3"/>
<dbReference type="STRING" id="386043.lwe1507"/>
<dbReference type="GeneID" id="61189383"/>
<dbReference type="KEGG" id="lwe:lwe1507"/>
<dbReference type="eggNOG" id="COG0775">
    <property type="taxonomic scope" value="Bacteria"/>
</dbReference>
<dbReference type="HOGENOM" id="CLU_031248_2_2_9"/>
<dbReference type="OrthoDB" id="9792278at2"/>
<dbReference type="UniPathway" id="UPA00904">
    <property type="reaction ID" value="UER00871"/>
</dbReference>
<dbReference type="Proteomes" id="UP000000779">
    <property type="component" value="Chromosome"/>
</dbReference>
<dbReference type="GO" id="GO:0005829">
    <property type="term" value="C:cytosol"/>
    <property type="evidence" value="ECO:0007669"/>
    <property type="project" value="TreeGrafter"/>
</dbReference>
<dbReference type="GO" id="GO:0008782">
    <property type="term" value="F:adenosylhomocysteine nucleosidase activity"/>
    <property type="evidence" value="ECO:0007669"/>
    <property type="project" value="UniProtKB-UniRule"/>
</dbReference>
<dbReference type="GO" id="GO:0008930">
    <property type="term" value="F:methylthioadenosine nucleosidase activity"/>
    <property type="evidence" value="ECO:0007669"/>
    <property type="project" value="UniProtKB-UniRule"/>
</dbReference>
<dbReference type="GO" id="GO:0019509">
    <property type="term" value="P:L-methionine salvage from methylthioadenosine"/>
    <property type="evidence" value="ECO:0007669"/>
    <property type="project" value="UniProtKB-UniRule"/>
</dbReference>
<dbReference type="GO" id="GO:0019284">
    <property type="term" value="P:L-methionine salvage from S-adenosylmethionine"/>
    <property type="evidence" value="ECO:0007669"/>
    <property type="project" value="TreeGrafter"/>
</dbReference>
<dbReference type="GO" id="GO:0009164">
    <property type="term" value="P:nucleoside catabolic process"/>
    <property type="evidence" value="ECO:0007669"/>
    <property type="project" value="InterPro"/>
</dbReference>
<dbReference type="CDD" id="cd09008">
    <property type="entry name" value="MTAN"/>
    <property type="match status" value="1"/>
</dbReference>
<dbReference type="FunFam" id="3.40.50.1580:FF:000001">
    <property type="entry name" value="MTA/SAH nucleosidase family protein"/>
    <property type="match status" value="1"/>
</dbReference>
<dbReference type="Gene3D" id="3.40.50.1580">
    <property type="entry name" value="Nucleoside phosphorylase domain"/>
    <property type="match status" value="1"/>
</dbReference>
<dbReference type="HAMAP" id="MF_01684">
    <property type="entry name" value="Salvage_MtnN"/>
    <property type="match status" value="1"/>
</dbReference>
<dbReference type="InterPro" id="IPR010049">
    <property type="entry name" value="MTA_SAH_Nsdase"/>
</dbReference>
<dbReference type="InterPro" id="IPR000845">
    <property type="entry name" value="Nucleoside_phosphorylase_d"/>
</dbReference>
<dbReference type="InterPro" id="IPR035994">
    <property type="entry name" value="Nucleoside_phosphorylase_sf"/>
</dbReference>
<dbReference type="NCBIfam" id="TIGR01704">
    <property type="entry name" value="MTA_SAH-Nsdase"/>
    <property type="match status" value="1"/>
</dbReference>
<dbReference type="NCBIfam" id="NF004079">
    <property type="entry name" value="PRK05584.1"/>
    <property type="match status" value="1"/>
</dbReference>
<dbReference type="PANTHER" id="PTHR46832">
    <property type="entry name" value="5'-METHYLTHIOADENOSINE/S-ADENOSYLHOMOCYSTEINE NUCLEOSIDASE"/>
    <property type="match status" value="1"/>
</dbReference>
<dbReference type="PANTHER" id="PTHR46832:SF1">
    <property type="entry name" value="5'-METHYLTHIOADENOSINE_S-ADENOSYLHOMOCYSTEINE NUCLEOSIDASE"/>
    <property type="match status" value="1"/>
</dbReference>
<dbReference type="Pfam" id="PF01048">
    <property type="entry name" value="PNP_UDP_1"/>
    <property type="match status" value="1"/>
</dbReference>
<dbReference type="SUPFAM" id="SSF53167">
    <property type="entry name" value="Purine and uridine phosphorylases"/>
    <property type="match status" value="1"/>
</dbReference>
<reference key="1">
    <citation type="journal article" date="2006" name="J. Bacteriol.">
        <title>Whole-genome sequence of Listeria welshimeri reveals common steps in genome reduction with Listeria innocua as compared to Listeria monocytogenes.</title>
        <authorList>
            <person name="Hain T."/>
            <person name="Steinweg C."/>
            <person name="Kuenne C.T."/>
            <person name="Billion A."/>
            <person name="Ghai R."/>
            <person name="Chatterjee S.S."/>
            <person name="Domann E."/>
            <person name="Kaerst U."/>
            <person name="Goesmann A."/>
            <person name="Bekel T."/>
            <person name="Bartels D."/>
            <person name="Kaiser O."/>
            <person name="Meyer F."/>
            <person name="Puehler A."/>
            <person name="Weisshaar B."/>
            <person name="Wehland J."/>
            <person name="Liang C."/>
            <person name="Dandekar T."/>
            <person name="Lampidis R."/>
            <person name="Kreft J."/>
            <person name="Goebel W."/>
            <person name="Chakraborty T."/>
        </authorList>
    </citation>
    <scope>NUCLEOTIDE SEQUENCE [LARGE SCALE GENOMIC DNA]</scope>
    <source>
        <strain>ATCC 35897 / DSM 20650 / CCUG 15529 / CIP 8149 / NCTC 11857 / SLCC 5334 / V8</strain>
    </source>
</reference>
<organism>
    <name type="scientific">Listeria welshimeri serovar 6b (strain ATCC 35897 / DSM 20650 / CCUG 15529 / CIP 8149 / NCTC 11857 / SLCC 5334 / V8)</name>
    <dbReference type="NCBI Taxonomy" id="386043"/>
    <lineage>
        <taxon>Bacteria</taxon>
        <taxon>Bacillati</taxon>
        <taxon>Bacillota</taxon>
        <taxon>Bacilli</taxon>
        <taxon>Bacillales</taxon>
        <taxon>Listeriaceae</taxon>
        <taxon>Listeria</taxon>
    </lineage>
</organism>
<feature type="chain" id="PRO_0000359315" description="5'-methylthioadenosine/S-adenosylhomocysteine nucleosidase">
    <location>
        <begin position="1"/>
        <end position="233"/>
    </location>
</feature>
<feature type="active site" description="Proton acceptor" evidence="1">
    <location>
        <position position="12"/>
    </location>
</feature>
<feature type="active site" description="Proton donor" evidence="1">
    <location>
        <position position="201"/>
    </location>
</feature>
<feature type="binding site" evidence="1">
    <location>
        <position position="78"/>
    </location>
    <ligand>
        <name>substrate</name>
    </ligand>
</feature>
<feature type="binding site" evidence="1">
    <location>
        <position position="156"/>
    </location>
    <ligand>
        <name>substrate</name>
    </ligand>
</feature>
<feature type="binding site" evidence="1">
    <location>
        <begin position="177"/>
        <end position="178"/>
    </location>
    <ligand>
        <name>substrate</name>
    </ligand>
</feature>
<sequence>MTIGIIGAMEEEVELLKNTMPHVEEVVIGGAKFYVGEIAGKEVVLLESGIGKVNAAIGTTLLADRFKPEIIINTGSAGGMAEGLAVGDVIISDRLAYGDVDVTEFGYTYGQVPRMPAFYQGDAVLLKKAETIYRDYFSQSENKAVYGLVITNDSFIMRPDQHELIRTFFPDVKAVEMEAAAIAQVAYQFDIPFLIIRAISDLANQEATISFDEFIHLAAKQSATCIIELLKTI</sequence>
<accession>A0AIU3</accession>
<keyword id="KW-0028">Amino-acid biosynthesis</keyword>
<keyword id="KW-0378">Hydrolase</keyword>
<keyword id="KW-0486">Methionine biosynthesis</keyword>
<name>MTNN_LISW6</name>
<proteinExistence type="inferred from homology"/>
<comment type="function">
    <text evidence="1">Catalyzes the irreversible cleavage of the glycosidic bond in both 5'-methylthioadenosine (MTA) and S-adenosylhomocysteine (SAH/AdoHcy) to adenine and the corresponding thioribose, 5'-methylthioribose and S-ribosylhomocysteine, respectively. Also cleaves 5'-deoxyadenosine, a toxic by-product of radical S-adenosylmethionine (SAM) enzymes, into 5-deoxyribose and adenine.</text>
</comment>
<comment type="catalytic activity">
    <reaction evidence="1">
        <text>S-adenosyl-L-homocysteine + H2O = S-(5-deoxy-D-ribos-5-yl)-L-homocysteine + adenine</text>
        <dbReference type="Rhea" id="RHEA:17805"/>
        <dbReference type="ChEBI" id="CHEBI:15377"/>
        <dbReference type="ChEBI" id="CHEBI:16708"/>
        <dbReference type="ChEBI" id="CHEBI:57856"/>
        <dbReference type="ChEBI" id="CHEBI:58195"/>
        <dbReference type="EC" id="3.2.2.9"/>
    </reaction>
</comment>
<comment type="catalytic activity">
    <reaction evidence="1">
        <text>S-methyl-5'-thioadenosine + H2O = 5-(methylsulfanyl)-D-ribose + adenine</text>
        <dbReference type="Rhea" id="RHEA:13617"/>
        <dbReference type="ChEBI" id="CHEBI:15377"/>
        <dbReference type="ChEBI" id="CHEBI:16708"/>
        <dbReference type="ChEBI" id="CHEBI:17509"/>
        <dbReference type="ChEBI" id="CHEBI:78440"/>
        <dbReference type="EC" id="3.2.2.9"/>
    </reaction>
</comment>
<comment type="catalytic activity">
    <reaction evidence="1">
        <text>5'-deoxyadenosine + H2O = 5-deoxy-D-ribose + adenine</text>
        <dbReference type="Rhea" id="RHEA:29859"/>
        <dbReference type="ChEBI" id="CHEBI:15377"/>
        <dbReference type="ChEBI" id="CHEBI:16708"/>
        <dbReference type="ChEBI" id="CHEBI:17319"/>
        <dbReference type="ChEBI" id="CHEBI:149540"/>
        <dbReference type="EC" id="3.2.2.9"/>
    </reaction>
    <physiologicalReaction direction="left-to-right" evidence="1">
        <dbReference type="Rhea" id="RHEA:29860"/>
    </physiologicalReaction>
</comment>
<comment type="pathway">
    <text evidence="1">Amino-acid biosynthesis; L-methionine biosynthesis via salvage pathway; S-methyl-5-thio-alpha-D-ribose 1-phosphate from S-methyl-5'-thioadenosine (hydrolase route): step 1/2.</text>
</comment>
<comment type="similarity">
    <text evidence="1">Belongs to the PNP/UDP phosphorylase family. MtnN subfamily.</text>
</comment>
<evidence type="ECO:0000255" key="1">
    <source>
        <dbReference type="HAMAP-Rule" id="MF_01684"/>
    </source>
</evidence>